<organism>
    <name type="scientific">Methanosarcina barkeri (strain Fusaro / DSM 804)</name>
    <dbReference type="NCBI Taxonomy" id="269797"/>
    <lineage>
        <taxon>Archaea</taxon>
        <taxon>Methanobacteriati</taxon>
        <taxon>Methanobacteriota</taxon>
        <taxon>Stenosarchaea group</taxon>
        <taxon>Methanomicrobia</taxon>
        <taxon>Methanosarcinales</taxon>
        <taxon>Methanosarcinaceae</taxon>
        <taxon>Methanosarcina</taxon>
    </lineage>
</organism>
<keyword id="KW-0028">Amino-acid biosynthesis</keyword>
<keyword id="KW-0055">Arginine biosynthesis</keyword>
<keyword id="KW-0067">ATP-binding</keyword>
<keyword id="KW-0963">Cytoplasm</keyword>
<keyword id="KW-0418">Kinase</keyword>
<keyword id="KW-0547">Nucleotide-binding</keyword>
<keyword id="KW-0808">Transferase</keyword>
<comment type="function">
    <text evidence="1">Catalyzes the ATP-dependent phosphorylation of N-acetyl-L-glutamate.</text>
</comment>
<comment type="catalytic activity">
    <reaction evidence="1">
        <text>N-acetyl-L-glutamate + ATP = N-acetyl-L-glutamyl 5-phosphate + ADP</text>
        <dbReference type="Rhea" id="RHEA:14629"/>
        <dbReference type="ChEBI" id="CHEBI:30616"/>
        <dbReference type="ChEBI" id="CHEBI:44337"/>
        <dbReference type="ChEBI" id="CHEBI:57936"/>
        <dbReference type="ChEBI" id="CHEBI:456216"/>
        <dbReference type="EC" id="2.7.2.8"/>
    </reaction>
</comment>
<comment type="pathway">
    <text evidence="1">Amino-acid biosynthesis; L-arginine biosynthesis; N(2)-acetyl-L-ornithine from L-glutamate: step 2/4.</text>
</comment>
<comment type="subcellular location">
    <subcellularLocation>
        <location evidence="1">Cytoplasm</location>
    </subcellularLocation>
</comment>
<comment type="similarity">
    <text evidence="1">Belongs to the acetylglutamate kinase family. ArgB subfamily.</text>
</comment>
<reference key="1">
    <citation type="journal article" date="2006" name="J. Bacteriol.">
        <title>The Methanosarcina barkeri genome: comparative analysis with Methanosarcina acetivorans and Methanosarcina mazei reveals extensive rearrangement within methanosarcinal genomes.</title>
        <authorList>
            <person name="Maeder D.L."/>
            <person name="Anderson I."/>
            <person name="Brettin T.S."/>
            <person name="Bruce D.C."/>
            <person name="Gilna P."/>
            <person name="Han C.S."/>
            <person name="Lapidus A."/>
            <person name="Metcalf W.W."/>
            <person name="Saunders E."/>
            <person name="Tapia R."/>
            <person name="Sowers K.R."/>
        </authorList>
    </citation>
    <scope>NUCLEOTIDE SEQUENCE [LARGE SCALE GENOMIC DNA]</scope>
    <source>
        <strain>Fusaro / DSM 804</strain>
    </source>
</reference>
<dbReference type="EC" id="2.7.2.8" evidence="1"/>
<dbReference type="EMBL" id="CP000099">
    <property type="protein sequence ID" value="AAZ70149.1"/>
    <property type="molecule type" value="Genomic_DNA"/>
</dbReference>
<dbReference type="SMR" id="Q46D93"/>
<dbReference type="STRING" id="269797.Mbar_A1181"/>
<dbReference type="PaxDb" id="269797-Mbar_A1181"/>
<dbReference type="KEGG" id="mba:Mbar_A1181"/>
<dbReference type="eggNOG" id="arCOG00862">
    <property type="taxonomic scope" value="Archaea"/>
</dbReference>
<dbReference type="HOGENOM" id="CLU_053680_0_0_2"/>
<dbReference type="UniPathway" id="UPA00068">
    <property type="reaction ID" value="UER00107"/>
</dbReference>
<dbReference type="GO" id="GO:0005737">
    <property type="term" value="C:cytoplasm"/>
    <property type="evidence" value="ECO:0007669"/>
    <property type="project" value="UniProtKB-SubCell"/>
</dbReference>
<dbReference type="GO" id="GO:0003991">
    <property type="term" value="F:acetylglutamate kinase activity"/>
    <property type="evidence" value="ECO:0007669"/>
    <property type="project" value="UniProtKB-UniRule"/>
</dbReference>
<dbReference type="GO" id="GO:0005524">
    <property type="term" value="F:ATP binding"/>
    <property type="evidence" value="ECO:0007669"/>
    <property type="project" value="UniProtKB-UniRule"/>
</dbReference>
<dbReference type="GO" id="GO:0042450">
    <property type="term" value="P:arginine biosynthetic process via ornithine"/>
    <property type="evidence" value="ECO:0007669"/>
    <property type="project" value="UniProtKB-UniRule"/>
</dbReference>
<dbReference type="GO" id="GO:0006526">
    <property type="term" value="P:L-arginine biosynthetic process"/>
    <property type="evidence" value="ECO:0007669"/>
    <property type="project" value="UniProtKB-UniPathway"/>
</dbReference>
<dbReference type="CDD" id="cd04250">
    <property type="entry name" value="AAK_NAGK-C"/>
    <property type="match status" value="1"/>
</dbReference>
<dbReference type="FunFam" id="3.40.1160.10:FF:000004">
    <property type="entry name" value="Acetylglutamate kinase"/>
    <property type="match status" value="1"/>
</dbReference>
<dbReference type="Gene3D" id="3.40.1160.10">
    <property type="entry name" value="Acetylglutamate kinase-like"/>
    <property type="match status" value="1"/>
</dbReference>
<dbReference type="HAMAP" id="MF_00082">
    <property type="entry name" value="ArgB"/>
    <property type="match status" value="1"/>
</dbReference>
<dbReference type="InterPro" id="IPR036393">
    <property type="entry name" value="AceGlu_kinase-like_sf"/>
</dbReference>
<dbReference type="InterPro" id="IPR004662">
    <property type="entry name" value="AcgluKinase_fam"/>
</dbReference>
<dbReference type="InterPro" id="IPR037528">
    <property type="entry name" value="ArgB"/>
</dbReference>
<dbReference type="InterPro" id="IPR001048">
    <property type="entry name" value="Asp/Glu/Uridylate_kinase"/>
</dbReference>
<dbReference type="InterPro" id="IPR041727">
    <property type="entry name" value="NAGK-C"/>
</dbReference>
<dbReference type="NCBIfam" id="TIGR00761">
    <property type="entry name" value="argB"/>
    <property type="match status" value="1"/>
</dbReference>
<dbReference type="PANTHER" id="PTHR23342">
    <property type="entry name" value="N-ACETYLGLUTAMATE SYNTHASE"/>
    <property type="match status" value="1"/>
</dbReference>
<dbReference type="PANTHER" id="PTHR23342:SF0">
    <property type="entry name" value="N-ACETYLGLUTAMATE SYNTHASE, MITOCHONDRIAL"/>
    <property type="match status" value="1"/>
</dbReference>
<dbReference type="Pfam" id="PF00696">
    <property type="entry name" value="AA_kinase"/>
    <property type="match status" value="1"/>
</dbReference>
<dbReference type="PIRSF" id="PIRSF000728">
    <property type="entry name" value="NAGK"/>
    <property type="match status" value="1"/>
</dbReference>
<dbReference type="SUPFAM" id="SSF53633">
    <property type="entry name" value="Carbamate kinase-like"/>
    <property type="match status" value="1"/>
</dbReference>
<evidence type="ECO:0000255" key="1">
    <source>
        <dbReference type="HAMAP-Rule" id="MF_00082"/>
    </source>
</evidence>
<sequence length="322" mass="35205">MWRLAITRVFNDKFKNRFSDSYIMELKRENVLIEALPYMQEFYDSIMVIKVGGNAMVSAQIMEDIIKDIVLLRYVGIKPVIVHGGGPEITEKMGRMGKKAEFFQGLRITDDETMEIAKMVLVGNINTKIVSLIGVCGGKGIGLTGYDGRMILGHKQAAKKVLINGIETEVDIGWVGECEVINPDILHIVLENGYIPVISPIAVDAKGNALNINADIVAGDIAAALHAKKLILMTDVSGLLRDMNDPNSHISRVTLEDIDHLIAEGVIQGGMIPKLKGAAVAVKNGVEKAHIINGSVSHSMLLELFTDRGIGTMVYKFEKPKN</sequence>
<accession>Q46D93</accession>
<protein>
    <recommendedName>
        <fullName evidence="1">Acetylglutamate kinase</fullName>
        <ecNumber evidence="1">2.7.2.8</ecNumber>
    </recommendedName>
    <alternativeName>
        <fullName evidence="1">N-acetyl-L-glutamate 5-phosphotransferase</fullName>
    </alternativeName>
    <alternativeName>
        <fullName evidence="1">NAG kinase</fullName>
        <shortName evidence="1">NAGK</shortName>
    </alternativeName>
</protein>
<name>ARGB_METBF</name>
<gene>
    <name evidence="1" type="primary">argB</name>
    <name type="ordered locus">Mbar_A1181</name>
</gene>
<feature type="chain" id="PRO_0000264789" description="Acetylglutamate kinase">
    <location>
        <begin position="1"/>
        <end position="322"/>
    </location>
</feature>
<feature type="binding site" evidence="1">
    <location>
        <begin position="85"/>
        <end position="86"/>
    </location>
    <ligand>
        <name>substrate</name>
    </ligand>
</feature>
<feature type="binding site" evidence="1">
    <location>
        <position position="107"/>
    </location>
    <ligand>
        <name>substrate</name>
    </ligand>
</feature>
<feature type="binding site" evidence="1">
    <location>
        <position position="211"/>
    </location>
    <ligand>
        <name>substrate</name>
    </ligand>
</feature>
<feature type="site" description="Transition state stabilizer" evidence="1">
    <location>
        <position position="50"/>
    </location>
</feature>
<feature type="site" description="Transition state stabilizer" evidence="1">
    <location>
        <position position="274"/>
    </location>
</feature>
<proteinExistence type="inferred from homology"/>